<reference key="1">
    <citation type="submission" date="2007-12" db="EMBL/GenBank/DDBJ databases">
        <title>Complete sequence of chromosome of Francisella philomiragia subsp. philomiragia ATCC 25017.</title>
        <authorList>
            <consortium name="US DOE Joint Genome Institute"/>
            <person name="Copeland A."/>
            <person name="Lucas S."/>
            <person name="Lapidus A."/>
            <person name="Barry K."/>
            <person name="Detter J.C."/>
            <person name="Glavina del Rio T."/>
            <person name="Hammon N."/>
            <person name="Israni S."/>
            <person name="Dalin E."/>
            <person name="Tice H."/>
            <person name="Pitluck S."/>
            <person name="Chain P."/>
            <person name="Malfatti S."/>
            <person name="Shin M."/>
            <person name="Vergez L."/>
            <person name="Schmutz J."/>
            <person name="Larimer F."/>
            <person name="Land M."/>
            <person name="Hauser L."/>
            <person name="Richardson P."/>
        </authorList>
    </citation>
    <scope>NUCLEOTIDE SEQUENCE [LARGE SCALE GENOMIC DNA]</scope>
    <source>
        <strain>ATCC 25017 / CCUG 19701 / FSC 153 / O#319-036</strain>
    </source>
</reference>
<accession>B0TWQ4</accession>
<name>NUOK_FRAP2</name>
<gene>
    <name evidence="1" type="primary">nuoK</name>
    <name type="ordered locus">Fphi_0939</name>
</gene>
<proteinExistence type="inferred from homology"/>
<keyword id="KW-0997">Cell inner membrane</keyword>
<keyword id="KW-1003">Cell membrane</keyword>
<keyword id="KW-0472">Membrane</keyword>
<keyword id="KW-0520">NAD</keyword>
<keyword id="KW-0874">Quinone</keyword>
<keyword id="KW-1278">Translocase</keyword>
<keyword id="KW-0812">Transmembrane</keyword>
<keyword id="KW-1133">Transmembrane helix</keyword>
<keyword id="KW-0813">Transport</keyword>
<keyword id="KW-0830">Ubiquinone</keyword>
<feature type="chain" id="PRO_0000390063" description="NADH-quinone oxidoreductase subunit K">
    <location>
        <begin position="1"/>
        <end position="105"/>
    </location>
</feature>
<feature type="transmembrane region" description="Helical" evidence="1">
    <location>
        <begin position="8"/>
        <end position="28"/>
    </location>
</feature>
<feature type="transmembrane region" description="Helical" evidence="1">
    <location>
        <begin position="33"/>
        <end position="53"/>
    </location>
</feature>
<feature type="transmembrane region" description="Helical" evidence="1">
    <location>
        <begin position="65"/>
        <end position="85"/>
    </location>
</feature>
<evidence type="ECO:0000255" key="1">
    <source>
        <dbReference type="HAMAP-Rule" id="MF_01456"/>
    </source>
</evidence>
<comment type="function">
    <text evidence="1">NDH-1 shuttles electrons from NADH, via FMN and iron-sulfur (Fe-S) centers, to quinones in the respiratory chain. The immediate electron acceptor for the enzyme in this species is believed to be ubiquinone. Couples the redox reaction to proton translocation (for every two electrons transferred, four hydrogen ions are translocated across the cytoplasmic membrane), and thus conserves the redox energy in a proton gradient.</text>
</comment>
<comment type="catalytic activity">
    <reaction evidence="1">
        <text>a quinone + NADH + 5 H(+)(in) = a quinol + NAD(+) + 4 H(+)(out)</text>
        <dbReference type="Rhea" id="RHEA:57888"/>
        <dbReference type="ChEBI" id="CHEBI:15378"/>
        <dbReference type="ChEBI" id="CHEBI:24646"/>
        <dbReference type="ChEBI" id="CHEBI:57540"/>
        <dbReference type="ChEBI" id="CHEBI:57945"/>
        <dbReference type="ChEBI" id="CHEBI:132124"/>
    </reaction>
</comment>
<comment type="subunit">
    <text evidence="1">NDH-1 is composed of 14 different subunits. Subunits NuoA, H, J, K, L, M, N constitute the membrane sector of the complex.</text>
</comment>
<comment type="subcellular location">
    <subcellularLocation>
        <location evidence="1">Cell inner membrane</location>
        <topology evidence="1">Multi-pass membrane protein</topology>
    </subcellularLocation>
</comment>
<comment type="similarity">
    <text evidence="1">Belongs to the complex I subunit 4L family.</text>
</comment>
<sequence length="105" mass="11450">MNSISVSVTNGLIFSTLLFVISVAGIIINRRNILILLMSIELMLLAVNTNFLIFANMHHQAMGGVFVFFIMAVAAAETAIGLAIVVAIFRKRKTIDLSKLNTLRG</sequence>
<protein>
    <recommendedName>
        <fullName evidence="1">NADH-quinone oxidoreductase subunit K</fullName>
        <ecNumber evidence="1">7.1.1.-</ecNumber>
    </recommendedName>
    <alternativeName>
        <fullName evidence="1">NADH dehydrogenase I subunit K</fullName>
    </alternativeName>
    <alternativeName>
        <fullName evidence="1">NDH-1 subunit K</fullName>
    </alternativeName>
</protein>
<organism>
    <name type="scientific">Francisella philomiragia subsp. philomiragia (strain ATCC 25017 / CCUG 19701 / FSC 153 / O#319-036)</name>
    <dbReference type="NCBI Taxonomy" id="484022"/>
    <lineage>
        <taxon>Bacteria</taxon>
        <taxon>Pseudomonadati</taxon>
        <taxon>Pseudomonadota</taxon>
        <taxon>Gammaproteobacteria</taxon>
        <taxon>Thiotrichales</taxon>
        <taxon>Francisellaceae</taxon>
        <taxon>Francisella</taxon>
    </lineage>
</organism>
<dbReference type="EC" id="7.1.1.-" evidence="1"/>
<dbReference type="EMBL" id="CP000937">
    <property type="protein sequence ID" value="ABZ87162.1"/>
    <property type="molecule type" value="Genomic_DNA"/>
</dbReference>
<dbReference type="SMR" id="B0TWQ4"/>
<dbReference type="KEGG" id="fph:Fphi_0939"/>
<dbReference type="eggNOG" id="COG0713">
    <property type="taxonomic scope" value="Bacteria"/>
</dbReference>
<dbReference type="HOGENOM" id="CLU_144724_2_0_6"/>
<dbReference type="GO" id="GO:0030964">
    <property type="term" value="C:NADH dehydrogenase complex"/>
    <property type="evidence" value="ECO:0007669"/>
    <property type="project" value="TreeGrafter"/>
</dbReference>
<dbReference type="GO" id="GO:0005886">
    <property type="term" value="C:plasma membrane"/>
    <property type="evidence" value="ECO:0007669"/>
    <property type="project" value="UniProtKB-SubCell"/>
</dbReference>
<dbReference type="GO" id="GO:0050136">
    <property type="term" value="F:NADH:ubiquinone reductase (non-electrogenic) activity"/>
    <property type="evidence" value="ECO:0007669"/>
    <property type="project" value="UniProtKB-UniRule"/>
</dbReference>
<dbReference type="GO" id="GO:0048038">
    <property type="term" value="F:quinone binding"/>
    <property type="evidence" value="ECO:0007669"/>
    <property type="project" value="UniProtKB-KW"/>
</dbReference>
<dbReference type="GO" id="GO:0042773">
    <property type="term" value="P:ATP synthesis coupled electron transport"/>
    <property type="evidence" value="ECO:0007669"/>
    <property type="project" value="InterPro"/>
</dbReference>
<dbReference type="FunFam" id="1.10.287.3510:FF:000001">
    <property type="entry name" value="NADH-quinone oxidoreductase subunit K"/>
    <property type="match status" value="1"/>
</dbReference>
<dbReference type="Gene3D" id="1.10.287.3510">
    <property type="match status" value="1"/>
</dbReference>
<dbReference type="HAMAP" id="MF_01456">
    <property type="entry name" value="NDH1_NuoK"/>
    <property type="match status" value="1"/>
</dbReference>
<dbReference type="InterPro" id="IPR001133">
    <property type="entry name" value="NADH_UbQ_OxRdtase_chain4L/K"/>
</dbReference>
<dbReference type="InterPro" id="IPR039428">
    <property type="entry name" value="NUOK/Mnh_C1-like"/>
</dbReference>
<dbReference type="NCBIfam" id="NF004320">
    <property type="entry name" value="PRK05715.1-2"/>
    <property type="match status" value="1"/>
</dbReference>
<dbReference type="NCBIfam" id="NF004321">
    <property type="entry name" value="PRK05715.1-3"/>
    <property type="match status" value="1"/>
</dbReference>
<dbReference type="NCBIfam" id="NF004323">
    <property type="entry name" value="PRK05715.1-5"/>
    <property type="match status" value="1"/>
</dbReference>
<dbReference type="PANTHER" id="PTHR11434:SF16">
    <property type="entry name" value="NADH-UBIQUINONE OXIDOREDUCTASE CHAIN 4L"/>
    <property type="match status" value="1"/>
</dbReference>
<dbReference type="PANTHER" id="PTHR11434">
    <property type="entry name" value="NADH-UBIQUINONE OXIDOREDUCTASE SUBUNIT ND4L"/>
    <property type="match status" value="1"/>
</dbReference>
<dbReference type="Pfam" id="PF00420">
    <property type="entry name" value="Oxidored_q2"/>
    <property type="match status" value="1"/>
</dbReference>